<proteinExistence type="inferred from homology"/>
<evidence type="ECO:0000255" key="1">
    <source>
        <dbReference type="HAMAP-Rule" id="MF_01633"/>
    </source>
</evidence>
<protein>
    <recommendedName>
        <fullName evidence="1">7-cyano-7-deazaguanine synthase</fullName>
        <ecNumber evidence="1">6.3.4.20</ecNumber>
    </recommendedName>
    <alternativeName>
        <fullName evidence="1">7-cyano-7-carbaguanine synthase</fullName>
    </alternativeName>
    <alternativeName>
        <fullName evidence="1">PreQ(0) synthase</fullName>
    </alternativeName>
    <alternativeName>
        <fullName evidence="1">Queuosine biosynthesis protein QueC</fullName>
    </alternativeName>
</protein>
<gene>
    <name evidence="1" type="primary">queC</name>
    <name type="ordered locus">Ecok1_04090</name>
    <name type="ORF">APECO1_1567</name>
</gene>
<keyword id="KW-0067">ATP-binding</keyword>
<keyword id="KW-0436">Ligase</keyword>
<keyword id="KW-0479">Metal-binding</keyword>
<keyword id="KW-0547">Nucleotide-binding</keyword>
<keyword id="KW-0671">Queuosine biosynthesis</keyword>
<keyword id="KW-1185">Reference proteome</keyword>
<keyword id="KW-0862">Zinc</keyword>
<name>QUEC_ECOK1</name>
<feature type="chain" id="PRO_1000069768" description="7-cyano-7-deazaguanine synthase">
    <location>
        <begin position="1"/>
        <end position="231"/>
    </location>
</feature>
<feature type="binding site" evidence="1">
    <location>
        <begin position="8"/>
        <end position="18"/>
    </location>
    <ligand>
        <name>ATP</name>
        <dbReference type="ChEBI" id="CHEBI:30616"/>
    </ligand>
</feature>
<feature type="binding site" evidence="1">
    <location>
        <position position="188"/>
    </location>
    <ligand>
        <name>Zn(2+)</name>
        <dbReference type="ChEBI" id="CHEBI:29105"/>
    </ligand>
</feature>
<feature type="binding site" evidence="1">
    <location>
        <position position="197"/>
    </location>
    <ligand>
        <name>Zn(2+)</name>
        <dbReference type="ChEBI" id="CHEBI:29105"/>
    </ligand>
</feature>
<feature type="binding site" evidence="1">
    <location>
        <position position="200"/>
    </location>
    <ligand>
        <name>Zn(2+)</name>
        <dbReference type="ChEBI" id="CHEBI:29105"/>
    </ligand>
</feature>
<feature type="binding site" evidence="1">
    <location>
        <position position="203"/>
    </location>
    <ligand>
        <name>Zn(2+)</name>
        <dbReference type="ChEBI" id="CHEBI:29105"/>
    </ligand>
</feature>
<comment type="function">
    <text evidence="1">Catalyzes the ATP-dependent conversion of 7-carboxy-7-deazaguanine (CDG) to 7-cyano-7-deazaguanine (preQ(0)).</text>
</comment>
<comment type="catalytic activity">
    <reaction evidence="1">
        <text>7-carboxy-7-deazaguanine + NH4(+) + ATP = 7-cyano-7-deazaguanine + ADP + phosphate + H2O + H(+)</text>
        <dbReference type="Rhea" id="RHEA:27982"/>
        <dbReference type="ChEBI" id="CHEBI:15377"/>
        <dbReference type="ChEBI" id="CHEBI:15378"/>
        <dbReference type="ChEBI" id="CHEBI:28938"/>
        <dbReference type="ChEBI" id="CHEBI:30616"/>
        <dbReference type="ChEBI" id="CHEBI:43474"/>
        <dbReference type="ChEBI" id="CHEBI:45075"/>
        <dbReference type="ChEBI" id="CHEBI:61036"/>
        <dbReference type="ChEBI" id="CHEBI:456216"/>
        <dbReference type="EC" id="6.3.4.20"/>
    </reaction>
</comment>
<comment type="cofactor">
    <cofactor evidence="1">
        <name>Zn(2+)</name>
        <dbReference type="ChEBI" id="CHEBI:29105"/>
    </cofactor>
    <text evidence="1">Binds 1 zinc ion per subunit.</text>
</comment>
<comment type="pathway">
    <text evidence="1">Purine metabolism; 7-cyano-7-deazaguanine biosynthesis.</text>
</comment>
<comment type="similarity">
    <text evidence="1">Belongs to the QueC family.</text>
</comment>
<dbReference type="EC" id="6.3.4.20" evidence="1"/>
<dbReference type="EMBL" id="CP000468">
    <property type="protein sequence ID" value="ABI99902.1"/>
    <property type="molecule type" value="Genomic_DNA"/>
</dbReference>
<dbReference type="RefSeq" id="WP_000817227.1">
    <property type="nucleotide sequence ID" value="NZ_CADILS010000009.1"/>
</dbReference>
<dbReference type="SMR" id="A1A8B3"/>
<dbReference type="GeneID" id="86862989"/>
<dbReference type="KEGG" id="ecv:APECO1_1567"/>
<dbReference type="HOGENOM" id="CLU_081854_0_0_6"/>
<dbReference type="UniPathway" id="UPA00391"/>
<dbReference type="Proteomes" id="UP000008216">
    <property type="component" value="Chromosome"/>
</dbReference>
<dbReference type="GO" id="GO:0005524">
    <property type="term" value="F:ATP binding"/>
    <property type="evidence" value="ECO:0007669"/>
    <property type="project" value="UniProtKB-UniRule"/>
</dbReference>
<dbReference type="GO" id="GO:0016879">
    <property type="term" value="F:ligase activity, forming carbon-nitrogen bonds"/>
    <property type="evidence" value="ECO:0007669"/>
    <property type="project" value="UniProtKB-UniRule"/>
</dbReference>
<dbReference type="GO" id="GO:0008270">
    <property type="term" value="F:zinc ion binding"/>
    <property type="evidence" value="ECO:0007669"/>
    <property type="project" value="UniProtKB-UniRule"/>
</dbReference>
<dbReference type="GO" id="GO:0008616">
    <property type="term" value="P:queuosine biosynthetic process"/>
    <property type="evidence" value="ECO:0007669"/>
    <property type="project" value="UniProtKB-UniRule"/>
</dbReference>
<dbReference type="CDD" id="cd01995">
    <property type="entry name" value="QueC-like"/>
    <property type="match status" value="1"/>
</dbReference>
<dbReference type="FunFam" id="3.40.50.620:FF:000017">
    <property type="entry name" value="7-cyano-7-deazaguanine synthase"/>
    <property type="match status" value="1"/>
</dbReference>
<dbReference type="Gene3D" id="3.40.50.620">
    <property type="entry name" value="HUPs"/>
    <property type="match status" value="1"/>
</dbReference>
<dbReference type="HAMAP" id="MF_01633">
    <property type="entry name" value="QueC"/>
    <property type="match status" value="1"/>
</dbReference>
<dbReference type="InterPro" id="IPR018317">
    <property type="entry name" value="QueC"/>
</dbReference>
<dbReference type="InterPro" id="IPR014729">
    <property type="entry name" value="Rossmann-like_a/b/a_fold"/>
</dbReference>
<dbReference type="NCBIfam" id="TIGR00364">
    <property type="entry name" value="7-cyano-7-deazaguanine synthase QueC"/>
    <property type="match status" value="1"/>
</dbReference>
<dbReference type="NCBIfam" id="NF008317">
    <property type="entry name" value="PRK11106.1"/>
    <property type="match status" value="1"/>
</dbReference>
<dbReference type="PANTHER" id="PTHR42914">
    <property type="entry name" value="7-CYANO-7-DEAZAGUANINE SYNTHASE"/>
    <property type="match status" value="1"/>
</dbReference>
<dbReference type="PANTHER" id="PTHR42914:SF1">
    <property type="entry name" value="7-CYANO-7-DEAZAGUANINE SYNTHASE"/>
    <property type="match status" value="1"/>
</dbReference>
<dbReference type="Pfam" id="PF06508">
    <property type="entry name" value="QueC"/>
    <property type="match status" value="1"/>
</dbReference>
<dbReference type="PIRSF" id="PIRSF006293">
    <property type="entry name" value="ExsB"/>
    <property type="match status" value="1"/>
</dbReference>
<dbReference type="SUPFAM" id="SSF52402">
    <property type="entry name" value="Adenine nucleotide alpha hydrolases-like"/>
    <property type="match status" value="1"/>
</dbReference>
<accession>A1A8B3</accession>
<reference key="1">
    <citation type="journal article" date="2007" name="J. Bacteriol.">
        <title>The genome sequence of avian pathogenic Escherichia coli strain O1:K1:H7 shares strong similarities with human extraintestinal pathogenic E. coli genomes.</title>
        <authorList>
            <person name="Johnson T.J."/>
            <person name="Kariyawasam S."/>
            <person name="Wannemuehler Y."/>
            <person name="Mangiamele P."/>
            <person name="Johnson S.J."/>
            <person name="Doetkott C."/>
            <person name="Skyberg J.A."/>
            <person name="Lynne A.M."/>
            <person name="Johnson J.R."/>
            <person name="Nolan L.K."/>
        </authorList>
    </citation>
    <scope>NUCLEOTIDE SEQUENCE [LARGE SCALE GENOMIC DNA]</scope>
</reference>
<sequence length="231" mass="25452">MKRAVVVFSGGQDSTTCLVQALQQYDEVHCVTFDYGQRHRAEIDVARELALKLGARAHKVLDVTLLNELAVSSLTRDSIPVPDYEPEADGIPNTFVPGRNILFLTLAAIYAYQVKAEAVITGVCETDFSGYPDCRDEFVKALNHAVSLGMAKDIRFETPLMWIDKAETWALADYYGKLDLVRNETLTCYNGIKGDGCGHCAACNLRANGLNHYLADKPTVMAAMKQKTGLK</sequence>
<organism>
    <name type="scientific">Escherichia coli O1:K1 / APEC</name>
    <dbReference type="NCBI Taxonomy" id="405955"/>
    <lineage>
        <taxon>Bacteria</taxon>
        <taxon>Pseudomonadati</taxon>
        <taxon>Pseudomonadota</taxon>
        <taxon>Gammaproteobacteria</taxon>
        <taxon>Enterobacterales</taxon>
        <taxon>Enterobacteriaceae</taxon>
        <taxon>Escherichia</taxon>
    </lineage>
</organism>